<protein>
    <recommendedName>
        <fullName evidence="1">Beta-ketoacyl-[acyl-carrier-protein] synthase III</fullName>
        <shortName evidence="1">Beta-ketoacyl-ACP synthase III</shortName>
        <shortName evidence="1">KAS III</shortName>
        <ecNumber evidence="1">2.3.1.180</ecNumber>
    </recommendedName>
    <alternativeName>
        <fullName evidence="1">3-oxoacyl-[acyl-carrier-protein] synthase 3</fullName>
    </alternativeName>
    <alternativeName>
        <fullName evidence="1">3-oxoacyl-[acyl-carrier-protein] synthase III</fullName>
    </alternativeName>
</protein>
<feature type="chain" id="PRO_1000070240" description="Beta-ketoacyl-[acyl-carrier-protein] synthase III">
    <location>
        <begin position="1"/>
        <end position="326"/>
    </location>
</feature>
<feature type="region of interest" description="ACP-binding" evidence="1">
    <location>
        <begin position="254"/>
        <end position="258"/>
    </location>
</feature>
<feature type="active site" evidence="1">
    <location>
        <position position="120"/>
    </location>
</feature>
<feature type="active site" evidence="1">
    <location>
        <position position="253"/>
    </location>
</feature>
<feature type="active site" evidence="1">
    <location>
        <position position="283"/>
    </location>
</feature>
<proteinExistence type="inferred from homology"/>
<organism>
    <name type="scientific">Cupriavidus necator (strain ATCC 17699 / DSM 428 / KCTC 22496 / NCIMB 10442 / H16 / Stanier 337)</name>
    <name type="common">Ralstonia eutropha</name>
    <dbReference type="NCBI Taxonomy" id="381666"/>
    <lineage>
        <taxon>Bacteria</taxon>
        <taxon>Pseudomonadati</taxon>
        <taxon>Pseudomonadota</taxon>
        <taxon>Betaproteobacteria</taxon>
        <taxon>Burkholderiales</taxon>
        <taxon>Burkholderiaceae</taxon>
        <taxon>Cupriavidus</taxon>
    </lineage>
</organism>
<dbReference type="EC" id="2.3.1.180" evidence="1"/>
<dbReference type="EMBL" id="AM260479">
    <property type="protein sequence ID" value="CAJ93652.1"/>
    <property type="molecule type" value="Genomic_DNA"/>
</dbReference>
<dbReference type="RefSeq" id="WP_010814677.1">
    <property type="nucleotide sequence ID" value="NZ_CP039287.1"/>
</dbReference>
<dbReference type="SMR" id="Q0K8L9"/>
<dbReference type="STRING" id="381666.H16_A2569"/>
<dbReference type="KEGG" id="reh:H16_A2569"/>
<dbReference type="eggNOG" id="COG0332">
    <property type="taxonomic scope" value="Bacteria"/>
</dbReference>
<dbReference type="HOGENOM" id="CLU_039592_4_1_4"/>
<dbReference type="OrthoDB" id="9815506at2"/>
<dbReference type="UniPathway" id="UPA00094"/>
<dbReference type="Proteomes" id="UP000008210">
    <property type="component" value="Chromosome 1"/>
</dbReference>
<dbReference type="GO" id="GO:0005737">
    <property type="term" value="C:cytoplasm"/>
    <property type="evidence" value="ECO:0007669"/>
    <property type="project" value="UniProtKB-SubCell"/>
</dbReference>
<dbReference type="GO" id="GO:0004315">
    <property type="term" value="F:3-oxoacyl-[acyl-carrier-protein] synthase activity"/>
    <property type="evidence" value="ECO:0007669"/>
    <property type="project" value="InterPro"/>
</dbReference>
<dbReference type="GO" id="GO:0033818">
    <property type="term" value="F:beta-ketoacyl-acyl-carrier-protein synthase III activity"/>
    <property type="evidence" value="ECO:0007669"/>
    <property type="project" value="UniProtKB-UniRule"/>
</dbReference>
<dbReference type="GO" id="GO:0006633">
    <property type="term" value="P:fatty acid biosynthetic process"/>
    <property type="evidence" value="ECO:0007669"/>
    <property type="project" value="UniProtKB-UniRule"/>
</dbReference>
<dbReference type="GO" id="GO:0044550">
    <property type="term" value="P:secondary metabolite biosynthetic process"/>
    <property type="evidence" value="ECO:0007669"/>
    <property type="project" value="TreeGrafter"/>
</dbReference>
<dbReference type="CDD" id="cd00830">
    <property type="entry name" value="KAS_III"/>
    <property type="match status" value="1"/>
</dbReference>
<dbReference type="FunFam" id="3.40.47.10:FF:000004">
    <property type="entry name" value="3-oxoacyl-[acyl-carrier-protein] synthase 3"/>
    <property type="match status" value="1"/>
</dbReference>
<dbReference type="Gene3D" id="3.40.47.10">
    <property type="match status" value="1"/>
</dbReference>
<dbReference type="HAMAP" id="MF_01815">
    <property type="entry name" value="FabH"/>
    <property type="match status" value="1"/>
</dbReference>
<dbReference type="InterPro" id="IPR013747">
    <property type="entry name" value="ACP_syn_III_C"/>
</dbReference>
<dbReference type="InterPro" id="IPR013751">
    <property type="entry name" value="ACP_syn_III_N"/>
</dbReference>
<dbReference type="InterPro" id="IPR004655">
    <property type="entry name" value="FabH"/>
</dbReference>
<dbReference type="InterPro" id="IPR016039">
    <property type="entry name" value="Thiolase-like"/>
</dbReference>
<dbReference type="NCBIfam" id="TIGR00747">
    <property type="entry name" value="fabH"/>
    <property type="match status" value="1"/>
</dbReference>
<dbReference type="NCBIfam" id="NF006829">
    <property type="entry name" value="PRK09352.1"/>
    <property type="match status" value="1"/>
</dbReference>
<dbReference type="PANTHER" id="PTHR34069">
    <property type="entry name" value="3-OXOACYL-[ACYL-CARRIER-PROTEIN] SYNTHASE 3"/>
    <property type="match status" value="1"/>
</dbReference>
<dbReference type="PANTHER" id="PTHR34069:SF2">
    <property type="entry name" value="BETA-KETOACYL-[ACYL-CARRIER-PROTEIN] SYNTHASE III"/>
    <property type="match status" value="1"/>
</dbReference>
<dbReference type="Pfam" id="PF08545">
    <property type="entry name" value="ACP_syn_III"/>
    <property type="match status" value="1"/>
</dbReference>
<dbReference type="Pfam" id="PF08541">
    <property type="entry name" value="ACP_syn_III_C"/>
    <property type="match status" value="1"/>
</dbReference>
<dbReference type="SUPFAM" id="SSF53901">
    <property type="entry name" value="Thiolase-like"/>
    <property type="match status" value="1"/>
</dbReference>
<comment type="function">
    <text evidence="1">Catalyzes the condensation reaction of fatty acid synthesis by the addition to an acyl acceptor of two carbons from malonyl-ACP. Catalyzes the first condensation reaction which initiates fatty acid synthesis and may therefore play a role in governing the total rate of fatty acid production. Possesses both acetoacetyl-ACP synthase and acetyl transacylase activities. Its substrate specificity determines the biosynthesis of branched-chain and/or straight-chain of fatty acids.</text>
</comment>
<comment type="catalytic activity">
    <reaction evidence="1">
        <text>malonyl-[ACP] + acetyl-CoA + H(+) = 3-oxobutanoyl-[ACP] + CO2 + CoA</text>
        <dbReference type="Rhea" id="RHEA:12080"/>
        <dbReference type="Rhea" id="RHEA-COMP:9623"/>
        <dbReference type="Rhea" id="RHEA-COMP:9625"/>
        <dbReference type="ChEBI" id="CHEBI:15378"/>
        <dbReference type="ChEBI" id="CHEBI:16526"/>
        <dbReference type="ChEBI" id="CHEBI:57287"/>
        <dbReference type="ChEBI" id="CHEBI:57288"/>
        <dbReference type="ChEBI" id="CHEBI:78449"/>
        <dbReference type="ChEBI" id="CHEBI:78450"/>
        <dbReference type="EC" id="2.3.1.180"/>
    </reaction>
</comment>
<comment type="pathway">
    <text evidence="1">Lipid metabolism; fatty acid biosynthesis.</text>
</comment>
<comment type="subunit">
    <text evidence="1">Homodimer.</text>
</comment>
<comment type="subcellular location">
    <subcellularLocation>
        <location evidence="1">Cytoplasm</location>
    </subcellularLocation>
</comment>
<comment type="domain">
    <text evidence="1">The last Arg residue of the ACP-binding site is essential for the weak association between ACP/AcpP and FabH.</text>
</comment>
<comment type="similarity">
    <text evidence="1">Belongs to the thiolase-like superfamily. FabH family.</text>
</comment>
<reference key="1">
    <citation type="journal article" date="2006" name="Nat. Biotechnol.">
        <title>Genome sequence of the bioplastic-producing 'Knallgas' bacterium Ralstonia eutropha H16.</title>
        <authorList>
            <person name="Pohlmann A."/>
            <person name="Fricke W.F."/>
            <person name="Reinecke F."/>
            <person name="Kusian B."/>
            <person name="Liesegang H."/>
            <person name="Cramm R."/>
            <person name="Eitinger T."/>
            <person name="Ewering C."/>
            <person name="Poetter M."/>
            <person name="Schwartz E."/>
            <person name="Strittmatter A."/>
            <person name="Voss I."/>
            <person name="Gottschalk G."/>
            <person name="Steinbuechel A."/>
            <person name="Friedrich B."/>
            <person name="Bowien B."/>
        </authorList>
    </citation>
    <scope>NUCLEOTIDE SEQUENCE [LARGE SCALE GENOMIC DNA]</scope>
    <source>
        <strain>ATCC 17699 / DSM 428 / KCTC 22496 / NCIMB 10442 / H16 / Stanier 337</strain>
    </source>
</reference>
<name>FABH_CUPNH</name>
<sequence>MTKYAKIIGTGSYLPPRRVTNHDLATQLAEKGIETSDDWIVSRSGISARHWAEPDVTSSDLAVKAAEQAIEAAGIDRQSIDLIIVATSTPDFVFPSTACIVQEKLGITNHCPAFDLQAVCSGFVYALATADKFIRSGSHRNVLVIGTEVFSRILDFNDRTTCVLFGDGAGAVLLSASEEPGILSTAMHSDGRHVDILCVPGNVAGGNITGNPFLHMDGQAVFKLAVNVLDKVAREAMEAASVTPGQIDWLIPHQANIRIMQGTAKKLGLPAERMVATVHEHGNTSAASIPLALDVAVRDGRIRAGQTVLMEGVGGGFTWGAVLLRM</sequence>
<keyword id="KW-0012">Acyltransferase</keyword>
<keyword id="KW-0963">Cytoplasm</keyword>
<keyword id="KW-0275">Fatty acid biosynthesis</keyword>
<keyword id="KW-0276">Fatty acid metabolism</keyword>
<keyword id="KW-0444">Lipid biosynthesis</keyword>
<keyword id="KW-0443">Lipid metabolism</keyword>
<keyword id="KW-0511">Multifunctional enzyme</keyword>
<keyword id="KW-1185">Reference proteome</keyword>
<keyword id="KW-0808">Transferase</keyword>
<accession>Q0K8L9</accession>
<gene>
    <name evidence="1" type="primary">fabH</name>
    <name type="ordered locus">H16_A2569</name>
</gene>
<evidence type="ECO:0000255" key="1">
    <source>
        <dbReference type="HAMAP-Rule" id="MF_01815"/>
    </source>
</evidence>